<feature type="chain" id="PRO_0000076123" description="Lon protease">
    <location>
        <begin position="1"/>
        <end position="812"/>
    </location>
</feature>
<feature type="domain" description="Lon N-terminal" evidence="3">
    <location>
        <begin position="22"/>
        <end position="215"/>
    </location>
</feature>
<feature type="domain" description="Lon proteolytic" evidence="2">
    <location>
        <begin position="602"/>
        <end position="783"/>
    </location>
</feature>
<feature type="region of interest" description="Disordered" evidence="4">
    <location>
        <begin position="787"/>
        <end position="812"/>
    </location>
</feature>
<feature type="active site" evidence="1">
    <location>
        <position position="689"/>
    </location>
</feature>
<feature type="active site" evidence="1">
    <location>
        <position position="732"/>
    </location>
</feature>
<feature type="binding site" evidence="1">
    <location>
        <begin position="367"/>
        <end position="374"/>
    </location>
    <ligand>
        <name>ATP</name>
        <dbReference type="ChEBI" id="CHEBI:30616"/>
    </ligand>
</feature>
<proteinExistence type="inferred from homology"/>
<evidence type="ECO:0000255" key="1">
    <source>
        <dbReference type="HAMAP-Rule" id="MF_01973"/>
    </source>
</evidence>
<evidence type="ECO:0000255" key="2">
    <source>
        <dbReference type="PROSITE-ProRule" id="PRU01122"/>
    </source>
</evidence>
<evidence type="ECO:0000255" key="3">
    <source>
        <dbReference type="PROSITE-ProRule" id="PRU01123"/>
    </source>
</evidence>
<evidence type="ECO:0000256" key="4">
    <source>
        <dbReference type="SAM" id="MobiDB-lite"/>
    </source>
</evidence>
<evidence type="ECO:0000305" key="5"/>
<protein>
    <recommendedName>
        <fullName evidence="1">Lon protease</fullName>
        <ecNumber evidence="1">3.4.21.53</ecNumber>
    </recommendedName>
    <alternativeName>
        <fullName evidence="1">ATP-dependent protease La</fullName>
    </alternativeName>
</protein>
<gene>
    <name evidence="1" type="primary">lon</name>
    <name type="ordered locus">BMEI0876</name>
</gene>
<sequence length="812" mass="89896">MTGIEQKTPVGGSETGGADGLYAVLPLRDIVVFPHMIVPLFVGREKSIRALEEVMGVDKQILLATQKNAADDDPAPDAIYEIGTIANVLQLLKLPDGTVKVLVEGTARAKISKFTDREDYHEAYAAALQEPEEDAVEIEALARSVVSDFENYVKLNKKISPEVVGTASQIDDYSKLADTVASHLAIKIPEKQEMLSVLSVRERLEKALSFMEAEISVLQVEKRIRSRVKRQMEKTQREYYLNEQMKAIQKELGDSEDGRDEVAEIEERITKTKLSKEAREKALAELKKLRSMSPMSAEATVVRNYLDWLLSIPWGKKSKVKQDLNFAQEVLDAEHFGLGKVKERIVEYLAVQARSTKIKGPILCLVGPPGVGKTSLARSIAKATGREYVRMSLGGVRDEAEIRGHRRTYIGSMPGKVIQSMKKAKKSNPLFLLDEIDKMGQDFRGDPSSAMLEVLDPKQNATFMDHYLEVEYDLSNVMFVTTANTMNIPGPLLDRMEIIRIAGYTEDEKLEIAKRHLLPKAIKDHALQPKEFSVTEDALRNVIRHYTREAGVRSLEREVMTLARKAVTEILKTKKKSVKITDKNLSDYLGVEKFRFGQIDGEDQVGVVTGLAWTEVGGELLTIEGVMMPGKGRMTVTGNLRDVMKESISAAASYVRSRAIDFGIEPPLFDKRDIHVHVPEGATPKDGPSAGIAMVTAIVSVLTGIPVRKDIAMTGEVTLRGRVLPIGGLKEKLLATLRGGIKKVLIPEENAKDLAEIPDNVKNNLEIVPVSRVGEVLKHALVRQPEPIEWTEQENPTAVPPVEDEAGASLAH</sequence>
<comment type="function">
    <text evidence="1">ATP-dependent serine protease that mediates the selective degradation of mutant and abnormal proteins as well as certain short-lived regulatory proteins. Required for cellular homeostasis and for survival from DNA damage and developmental changes induced by stress. Degrades polypeptides processively to yield small peptide fragments that are 5 to 10 amino acids long. Binds to DNA in a double-stranded, site-specific manner.</text>
</comment>
<comment type="catalytic activity">
    <reaction evidence="1">
        <text>Hydrolysis of proteins in presence of ATP.</text>
        <dbReference type="EC" id="3.4.21.53"/>
    </reaction>
</comment>
<comment type="subunit">
    <text evidence="1">Homohexamer. Organized in a ring with a central cavity.</text>
</comment>
<comment type="subcellular location">
    <subcellularLocation>
        <location evidence="1">Cytoplasm</location>
    </subcellularLocation>
</comment>
<comment type="induction">
    <text evidence="1">By heat shock.</text>
</comment>
<comment type="similarity">
    <text evidence="1">Belongs to the peptidase S16 family.</text>
</comment>
<comment type="sequence caution" evidence="5">
    <conflict type="erroneous initiation">
        <sequence resource="EMBL-CDS" id="AAL52057"/>
    </conflict>
</comment>
<dbReference type="EC" id="3.4.21.53" evidence="1"/>
<dbReference type="EMBL" id="AE008917">
    <property type="protein sequence ID" value="AAL52057.1"/>
    <property type="status" value="ALT_INIT"/>
    <property type="molecule type" value="Genomic_DNA"/>
</dbReference>
<dbReference type="PIR" id="AF3361">
    <property type="entry name" value="AF3361"/>
</dbReference>
<dbReference type="RefSeq" id="WP_004683829.1">
    <property type="nucleotide sequence ID" value="NZ_GG703780.1"/>
</dbReference>
<dbReference type="SMR" id="Q8YHC6"/>
<dbReference type="MEROPS" id="S16.001"/>
<dbReference type="GeneID" id="29593684"/>
<dbReference type="KEGG" id="bme:BMEI0876"/>
<dbReference type="KEGG" id="bmel:DK63_546"/>
<dbReference type="PATRIC" id="fig|224914.52.peg.568"/>
<dbReference type="eggNOG" id="COG0466">
    <property type="taxonomic scope" value="Bacteria"/>
</dbReference>
<dbReference type="PhylomeDB" id="Q8YHC6"/>
<dbReference type="PRO" id="PR:Q8YHC6"/>
<dbReference type="Proteomes" id="UP000000419">
    <property type="component" value="Chromosome I"/>
</dbReference>
<dbReference type="GO" id="GO:0005737">
    <property type="term" value="C:cytoplasm"/>
    <property type="evidence" value="ECO:0007669"/>
    <property type="project" value="UniProtKB-SubCell"/>
</dbReference>
<dbReference type="GO" id="GO:0005524">
    <property type="term" value="F:ATP binding"/>
    <property type="evidence" value="ECO:0007669"/>
    <property type="project" value="UniProtKB-UniRule"/>
</dbReference>
<dbReference type="GO" id="GO:0016887">
    <property type="term" value="F:ATP hydrolysis activity"/>
    <property type="evidence" value="ECO:0007669"/>
    <property type="project" value="UniProtKB-UniRule"/>
</dbReference>
<dbReference type="GO" id="GO:0004176">
    <property type="term" value="F:ATP-dependent peptidase activity"/>
    <property type="evidence" value="ECO:0007669"/>
    <property type="project" value="UniProtKB-UniRule"/>
</dbReference>
<dbReference type="GO" id="GO:0043565">
    <property type="term" value="F:sequence-specific DNA binding"/>
    <property type="evidence" value="ECO:0007669"/>
    <property type="project" value="UniProtKB-UniRule"/>
</dbReference>
<dbReference type="GO" id="GO:0004252">
    <property type="term" value="F:serine-type endopeptidase activity"/>
    <property type="evidence" value="ECO:0007669"/>
    <property type="project" value="UniProtKB-UniRule"/>
</dbReference>
<dbReference type="GO" id="GO:0034605">
    <property type="term" value="P:cellular response to heat"/>
    <property type="evidence" value="ECO:0007669"/>
    <property type="project" value="UniProtKB-UniRule"/>
</dbReference>
<dbReference type="GO" id="GO:0006515">
    <property type="term" value="P:protein quality control for misfolded or incompletely synthesized proteins"/>
    <property type="evidence" value="ECO:0007669"/>
    <property type="project" value="UniProtKB-UniRule"/>
</dbReference>
<dbReference type="CDD" id="cd19500">
    <property type="entry name" value="RecA-like_Lon"/>
    <property type="match status" value="1"/>
</dbReference>
<dbReference type="FunFam" id="3.30.230.10:FF:000010">
    <property type="entry name" value="Lon protease"/>
    <property type="match status" value="1"/>
</dbReference>
<dbReference type="FunFam" id="1.20.5.5270:FF:000002">
    <property type="entry name" value="Lon protease homolog"/>
    <property type="match status" value="1"/>
</dbReference>
<dbReference type="FunFam" id="3.40.50.300:FF:000021">
    <property type="entry name" value="Lon protease homolog"/>
    <property type="match status" value="1"/>
</dbReference>
<dbReference type="Gene3D" id="1.10.8.60">
    <property type="match status" value="1"/>
</dbReference>
<dbReference type="Gene3D" id="1.20.5.5270">
    <property type="match status" value="1"/>
</dbReference>
<dbReference type="Gene3D" id="1.20.58.1480">
    <property type="match status" value="1"/>
</dbReference>
<dbReference type="Gene3D" id="3.30.230.10">
    <property type="match status" value="1"/>
</dbReference>
<dbReference type="Gene3D" id="2.30.130.40">
    <property type="entry name" value="LON domain-like"/>
    <property type="match status" value="1"/>
</dbReference>
<dbReference type="Gene3D" id="3.40.50.300">
    <property type="entry name" value="P-loop containing nucleotide triphosphate hydrolases"/>
    <property type="match status" value="1"/>
</dbReference>
<dbReference type="HAMAP" id="MF_01973">
    <property type="entry name" value="lon_bact"/>
    <property type="match status" value="1"/>
</dbReference>
<dbReference type="InterPro" id="IPR003593">
    <property type="entry name" value="AAA+_ATPase"/>
</dbReference>
<dbReference type="InterPro" id="IPR003959">
    <property type="entry name" value="ATPase_AAA_core"/>
</dbReference>
<dbReference type="InterPro" id="IPR027543">
    <property type="entry name" value="Lon_bac"/>
</dbReference>
<dbReference type="InterPro" id="IPR004815">
    <property type="entry name" value="Lon_bac/euk-typ"/>
</dbReference>
<dbReference type="InterPro" id="IPR054594">
    <property type="entry name" value="Lon_lid"/>
</dbReference>
<dbReference type="InterPro" id="IPR008269">
    <property type="entry name" value="Lon_proteolytic"/>
</dbReference>
<dbReference type="InterPro" id="IPR027065">
    <property type="entry name" value="Lon_Prtase"/>
</dbReference>
<dbReference type="InterPro" id="IPR003111">
    <property type="entry name" value="Lon_prtase_N"/>
</dbReference>
<dbReference type="InterPro" id="IPR046336">
    <property type="entry name" value="Lon_prtase_N_sf"/>
</dbReference>
<dbReference type="InterPro" id="IPR027417">
    <property type="entry name" value="P-loop_NTPase"/>
</dbReference>
<dbReference type="InterPro" id="IPR008268">
    <property type="entry name" value="Peptidase_S16_AS"/>
</dbReference>
<dbReference type="InterPro" id="IPR015947">
    <property type="entry name" value="PUA-like_sf"/>
</dbReference>
<dbReference type="InterPro" id="IPR020568">
    <property type="entry name" value="Ribosomal_Su5_D2-typ_SF"/>
</dbReference>
<dbReference type="InterPro" id="IPR014721">
    <property type="entry name" value="Ribsml_uS5_D2-typ_fold_subgr"/>
</dbReference>
<dbReference type="NCBIfam" id="TIGR00763">
    <property type="entry name" value="lon"/>
    <property type="match status" value="1"/>
</dbReference>
<dbReference type="NCBIfam" id="NF008053">
    <property type="entry name" value="PRK10787.1"/>
    <property type="match status" value="1"/>
</dbReference>
<dbReference type="PANTHER" id="PTHR10046">
    <property type="entry name" value="ATP DEPENDENT LON PROTEASE FAMILY MEMBER"/>
    <property type="match status" value="1"/>
</dbReference>
<dbReference type="Pfam" id="PF00004">
    <property type="entry name" value="AAA"/>
    <property type="match status" value="1"/>
</dbReference>
<dbReference type="Pfam" id="PF05362">
    <property type="entry name" value="Lon_C"/>
    <property type="match status" value="1"/>
</dbReference>
<dbReference type="Pfam" id="PF22667">
    <property type="entry name" value="Lon_lid"/>
    <property type="match status" value="1"/>
</dbReference>
<dbReference type="Pfam" id="PF02190">
    <property type="entry name" value="LON_substr_bdg"/>
    <property type="match status" value="1"/>
</dbReference>
<dbReference type="PIRSF" id="PIRSF001174">
    <property type="entry name" value="Lon_proteas"/>
    <property type="match status" value="1"/>
</dbReference>
<dbReference type="PRINTS" id="PR00830">
    <property type="entry name" value="ENDOLAPTASE"/>
</dbReference>
<dbReference type="SMART" id="SM00382">
    <property type="entry name" value="AAA"/>
    <property type="match status" value="1"/>
</dbReference>
<dbReference type="SMART" id="SM00464">
    <property type="entry name" value="LON"/>
    <property type="match status" value="1"/>
</dbReference>
<dbReference type="SUPFAM" id="SSF52540">
    <property type="entry name" value="P-loop containing nucleoside triphosphate hydrolases"/>
    <property type="match status" value="1"/>
</dbReference>
<dbReference type="SUPFAM" id="SSF88697">
    <property type="entry name" value="PUA domain-like"/>
    <property type="match status" value="1"/>
</dbReference>
<dbReference type="SUPFAM" id="SSF54211">
    <property type="entry name" value="Ribosomal protein S5 domain 2-like"/>
    <property type="match status" value="1"/>
</dbReference>
<dbReference type="PROSITE" id="PS51787">
    <property type="entry name" value="LON_N"/>
    <property type="match status" value="1"/>
</dbReference>
<dbReference type="PROSITE" id="PS51786">
    <property type="entry name" value="LON_PROTEOLYTIC"/>
    <property type="match status" value="1"/>
</dbReference>
<dbReference type="PROSITE" id="PS01046">
    <property type="entry name" value="LON_SER"/>
    <property type="match status" value="1"/>
</dbReference>
<reference key="1">
    <citation type="journal article" date="2002" name="Proc. Natl. Acad. Sci. U.S.A.">
        <title>The genome sequence of the facultative intracellular pathogen Brucella melitensis.</title>
        <authorList>
            <person name="DelVecchio V.G."/>
            <person name="Kapatral V."/>
            <person name="Redkar R.J."/>
            <person name="Patra G."/>
            <person name="Mujer C."/>
            <person name="Los T."/>
            <person name="Ivanova N."/>
            <person name="Anderson I."/>
            <person name="Bhattacharyya A."/>
            <person name="Lykidis A."/>
            <person name="Reznik G."/>
            <person name="Jablonski L."/>
            <person name="Larsen N."/>
            <person name="D'Souza M."/>
            <person name="Bernal A."/>
            <person name="Mazur M."/>
            <person name="Goltsman E."/>
            <person name="Selkov E."/>
            <person name="Elzer P.H."/>
            <person name="Hagius S."/>
            <person name="O'Callaghan D."/>
            <person name="Letesson J.-J."/>
            <person name="Haselkorn R."/>
            <person name="Kyrpides N.C."/>
            <person name="Overbeek R."/>
        </authorList>
    </citation>
    <scope>NUCLEOTIDE SEQUENCE [LARGE SCALE GENOMIC DNA]</scope>
    <source>
        <strain>ATCC 23456 / CCUG 17765 / NCTC 10094 / 16M</strain>
    </source>
</reference>
<name>LON_BRUME</name>
<organism>
    <name type="scientific">Brucella melitensis biotype 1 (strain ATCC 23456 / CCUG 17765 / NCTC 10094 / 16M)</name>
    <dbReference type="NCBI Taxonomy" id="224914"/>
    <lineage>
        <taxon>Bacteria</taxon>
        <taxon>Pseudomonadati</taxon>
        <taxon>Pseudomonadota</taxon>
        <taxon>Alphaproteobacteria</taxon>
        <taxon>Hyphomicrobiales</taxon>
        <taxon>Brucellaceae</taxon>
        <taxon>Brucella/Ochrobactrum group</taxon>
        <taxon>Brucella</taxon>
    </lineage>
</organism>
<accession>Q8YHC6</accession>
<keyword id="KW-0067">ATP-binding</keyword>
<keyword id="KW-0963">Cytoplasm</keyword>
<keyword id="KW-0378">Hydrolase</keyword>
<keyword id="KW-0547">Nucleotide-binding</keyword>
<keyword id="KW-0645">Protease</keyword>
<keyword id="KW-0720">Serine protease</keyword>
<keyword id="KW-0346">Stress response</keyword>